<keyword id="KW-0963">Cytoplasm</keyword>
<keyword id="KW-0967">Endosome</keyword>
<keyword id="KW-0472">Membrane</keyword>
<keyword id="KW-0479">Metal-binding</keyword>
<keyword id="KW-0653">Protein transport</keyword>
<keyword id="KW-1185">Reference proteome</keyword>
<keyword id="KW-0813">Transport</keyword>
<keyword id="KW-0862">Zinc</keyword>
<dbReference type="EMBL" id="AL844518">
    <property type="protein sequence ID" value="CAE50610.1"/>
    <property type="molecule type" value="Genomic_DNA"/>
</dbReference>
<dbReference type="EMBL" id="BC045981">
    <property type="protein sequence ID" value="AAH45981.1"/>
    <property type="molecule type" value="mRNA"/>
</dbReference>
<dbReference type="EMBL" id="BC071331">
    <property type="protein sequence ID" value="AAH71331.1"/>
    <property type="molecule type" value="mRNA"/>
</dbReference>
<dbReference type="RefSeq" id="NP_956331.1">
    <property type="nucleotide sequence ID" value="NM_200037.2"/>
</dbReference>
<dbReference type="SMR" id="Q7ZV68"/>
<dbReference type="FunCoup" id="Q7ZV68">
    <property type="interactions" value="3165"/>
</dbReference>
<dbReference type="STRING" id="7955.ENSDARP00000092020"/>
<dbReference type="PaxDb" id="7955-ENSDARP00000092020"/>
<dbReference type="Ensembl" id="ENSDART00000101246">
    <property type="protein sequence ID" value="ENSDARP00000092020"/>
    <property type="gene ID" value="ENSDARG00000069521"/>
</dbReference>
<dbReference type="GeneID" id="573437"/>
<dbReference type="KEGG" id="dre:573437"/>
<dbReference type="AGR" id="ZFIN:ZDB-GENE-030131-8764"/>
<dbReference type="CTD" id="51699"/>
<dbReference type="ZFIN" id="ZDB-GENE-030131-8764">
    <property type="gene designation" value="vps29"/>
</dbReference>
<dbReference type="eggNOG" id="KOG3325">
    <property type="taxonomic scope" value="Eukaryota"/>
</dbReference>
<dbReference type="HOGENOM" id="CLU_063749_0_1_1"/>
<dbReference type="InParanoid" id="Q7ZV68"/>
<dbReference type="OMA" id="VRGNMDY"/>
<dbReference type="OrthoDB" id="10258130at2759"/>
<dbReference type="PhylomeDB" id="Q7ZV68"/>
<dbReference type="TreeFam" id="TF300880"/>
<dbReference type="PRO" id="PR:Q7ZV68"/>
<dbReference type="Proteomes" id="UP000000437">
    <property type="component" value="Chromosome 21"/>
</dbReference>
<dbReference type="Bgee" id="ENSDARG00000069521">
    <property type="expression patterns" value="Expressed in brain and 29 other cell types or tissues"/>
</dbReference>
<dbReference type="GO" id="GO:0005829">
    <property type="term" value="C:cytosol"/>
    <property type="evidence" value="ECO:0007669"/>
    <property type="project" value="GOC"/>
</dbReference>
<dbReference type="GO" id="GO:0005768">
    <property type="term" value="C:endosome"/>
    <property type="evidence" value="ECO:0000318"/>
    <property type="project" value="GO_Central"/>
</dbReference>
<dbReference type="GO" id="GO:0010008">
    <property type="term" value="C:endosome membrane"/>
    <property type="evidence" value="ECO:0007669"/>
    <property type="project" value="UniProtKB-SubCell"/>
</dbReference>
<dbReference type="GO" id="GO:0030904">
    <property type="term" value="C:retromer complex"/>
    <property type="evidence" value="ECO:0000250"/>
    <property type="project" value="UniProtKB"/>
</dbReference>
<dbReference type="GO" id="GO:0046872">
    <property type="term" value="F:metal ion binding"/>
    <property type="evidence" value="ECO:0007669"/>
    <property type="project" value="UniProtKB-KW"/>
</dbReference>
<dbReference type="GO" id="GO:0032456">
    <property type="term" value="P:endocytic recycling"/>
    <property type="evidence" value="ECO:0000250"/>
    <property type="project" value="UniProtKB"/>
</dbReference>
<dbReference type="GO" id="GO:0006886">
    <property type="term" value="P:intracellular protein transport"/>
    <property type="evidence" value="ECO:0000318"/>
    <property type="project" value="GO_Central"/>
</dbReference>
<dbReference type="GO" id="GO:0042147">
    <property type="term" value="P:retrograde transport, endosome to Golgi"/>
    <property type="evidence" value="ECO:0000318"/>
    <property type="project" value="GO_Central"/>
</dbReference>
<dbReference type="CDD" id="cd07394">
    <property type="entry name" value="MPP_Vps29"/>
    <property type="match status" value="1"/>
</dbReference>
<dbReference type="FunFam" id="3.60.21.10:FF:000009">
    <property type="entry name" value="Vacuolar protein sorting-associated protein 29"/>
    <property type="match status" value="1"/>
</dbReference>
<dbReference type="Gene3D" id="3.60.21.10">
    <property type="match status" value="1"/>
</dbReference>
<dbReference type="InterPro" id="IPR024654">
    <property type="entry name" value="Calcineurin-like_PHP_lpxH"/>
</dbReference>
<dbReference type="InterPro" id="IPR029052">
    <property type="entry name" value="Metallo-depent_PP-like"/>
</dbReference>
<dbReference type="InterPro" id="IPR000979">
    <property type="entry name" value="Phosphodiesterase_MJ0936/Vps29"/>
</dbReference>
<dbReference type="InterPro" id="IPR028661">
    <property type="entry name" value="Vps29"/>
</dbReference>
<dbReference type="NCBIfam" id="TIGR00040">
    <property type="entry name" value="yfcE"/>
    <property type="match status" value="1"/>
</dbReference>
<dbReference type="PANTHER" id="PTHR11124">
    <property type="entry name" value="VACUOLAR SORTING PROTEIN VPS29"/>
    <property type="match status" value="1"/>
</dbReference>
<dbReference type="Pfam" id="PF12850">
    <property type="entry name" value="Metallophos_2"/>
    <property type="match status" value="1"/>
</dbReference>
<dbReference type="SUPFAM" id="SSF56300">
    <property type="entry name" value="Metallo-dependent phosphatases"/>
    <property type="match status" value="1"/>
</dbReference>
<organism>
    <name type="scientific">Danio rerio</name>
    <name type="common">Zebrafish</name>
    <name type="synonym">Brachydanio rerio</name>
    <dbReference type="NCBI Taxonomy" id="7955"/>
    <lineage>
        <taxon>Eukaryota</taxon>
        <taxon>Metazoa</taxon>
        <taxon>Chordata</taxon>
        <taxon>Craniata</taxon>
        <taxon>Vertebrata</taxon>
        <taxon>Euteleostomi</taxon>
        <taxon>Actinopterygii</taxon>
        <taxon>Neopterygii</taxon>
        <taxon>Teleostei</taxon>
        <taxon>Ostariophysi</taxon>
        <taxon>Cypriniformes</taxon>
        <taxon>Danionidae</taxon>
        <taxon>Danioninae</taxon>
        <taxon>Danio</taxon>
    </lineage>
</organism>
<proteinExistence type="evidence at transcript level"/>
<sequence>MLVLVLGDLHIPHRCNTLPAKFKKLLVPGKIQHILCTGNLCTKESYDYLKTLAGDVHIVRGDFDENLNYPEQKVVTVGQFKIGLIHGHQVIPWGDMASLALLQRQLDVDILISGHTHKFEAFENENKFYINPGSATGAYSALESNITPSFVLMDIQASTVVTYVYQLIGDDVKVERIEYKKS</sequence>
<protein>
    <recommendedName>
        <fullName>Vacuolar protein sorting-associated protein 29</fullName>
    </recommendedName>
    <alternativeName>
        <fullName>Vesicle protein sorting 29</fullName>
    </alternativeName>
</protein>
<accession>Q7ZV68</accession>
<name>VPS29_DANRE</name>
<comment type="function">
    <text evidence="2">Component of the commander complex that is essential for endosomal recycling of transmembrane cargos; the commander complex is composed of the CCC subcomplex and the retriever subcomplex (By similarity). Component of the retriever complex, which is a heterotrimeric complex related to retromer cargo-selective complex (CSC) and essential for retromer-independent retrieval and recycling of numerous cargos (By similarity). Component of the retromer cargo-selective complex (CSC). The CSC is believed to be the core functional component of retromer or respective retromer complex variants acting to prevent missorting of selected transmembrane cargo proteins into the lysosomal degradation pathway. In the endosomes, retriever complex drives the retrieval and recycling of NxxY-motif-containing cargo proteins by coupling to snx17, a cargo essential for the homeostatic maintenance of numerous cell surface proteins associated with processes that include cell migration, cell adhesion, nutrient supply and cell signaling (By similarity). The recruitment of the retriever complex to the endosomal membrane involves CCC and WASH complexes (By similarity).</text>
</comment>
<comment type="subunit">
    <text evidence="2">Component of the commander complex consisting of the CCC subcomplex and the retriever subcomplex (By similarity). Component of the heterotrimeric retriever complex formed by vps26c, vps29 and vps35l; within the complex interacts with vps35l (By similarity). Component of the heterotrimeric retromer cargo-selective complex (CSC), also described as vacuolar protein sorting subcomplex (VPS), formed by vps26 (vps26a or vps26b), vps29 and vps35 (By similarity). The CSC has a highly elongated structure with vps26 and vps29 binding independently at opposite distal ends of vps35 as central platform (By similarity).</text>
</comment>
<comment type="subcellular location">
    <subcellularLocation>
        <location>Cytoplasm</location>
    </subcellularLocation>
    <subcellularLocation>
        <location>Membrane</location>
        <topology>Peripheral membrane protein</topology>
    </subcellularLocation>
    <subcellularLocation>
        <location evidence="1">Endosome membrane</location>
        <topology evidence="1">Peripheral membrane protein</topology>
    </subcellularLocation>
</comment>
<comment type="similarity">
    <text evidence="3">Belongs to the VPS29 family.</text>
</comment>
<reference key="1">
    <citation type="journal article" date="2013" name="Nature">
        <title>The zebrafish reference genome sequence and its relationship to the human genome.</title>
        <authorList>
            <person name="Howe K."/>
            <person name="Clark M.D."/>
            <person name="Torroja C.F."/>
            <person name="Torrance J."/>
            <person name="Berthelot C."/>
            <person name="Muffato M."/>
            <person name="Collins J.E."/>
            <person name="Humphray S."/>
            <person name="McLaren K."/>
            <person name="Matthews L."/>
            <person name="McLaren S."/>
            <person name="Sealy I."/>
            <person name="Caccamo M."/>
            <person name="Churcher C."/>
            <person name="Scott C."/>
            <person name="Barrett J.C."/>
            <person name="Koch R."/>
            <person name="Rauch G.J."/>
            <person name="White S."/>
            <person name="Chow W."/>
            <person name="Kilian B."/>
            <person name="Quintais L.T."/>
            <person name="Guerra-Assuncao J.A."/>
            <person name="Zhou Y."/>
            <person name="Gu Y."/>
            <person name="Yen J."/>
            <person name="Vogel J.H."/>
            <person name="Eyre T."/>
            <person name="Redmond S."/>
            <person name="Banerjee R."/>
            <person name="Chi J."/>
            <person name="Fu B."/>
            <person name="Langley E."/>
            <person name="Maguire S.F."/>
            <person name="Laird G.K."/>
            <person name="Lloyd D."/>
            <person name="Kenyon E."/>
            <person name="Donaldson S."/>
            <person name="Sehra H."/>
            <person name="Almeida-King J."/>
            <person name="Loveland J."/>
            <person name="Trevanion S."/>
            <person name="Jones M."/>
            <person name="Quail M."/>
            <person name="Willey D."/>
            <person name="Hunt A."/>
            <person name="Burton J."/>
            <person name="Sims S."/>
            <person name="McLay K."/>
            <person name="Plumb B."/>
            <person name="Davis J."/>
            <person name="Clee C."/>
            <person name="Oliver K."/>
            <person name="Clark R."/>
            <person name="Riddle C."/>
            <person name="Elliot D."/>
            <person name="Threadgold G."/>
            <person name="Harden G."/>
            <person name="Ware D."/>
            <person name="Begum S."/>
            <person name="Mortimore B."/>
            <person name="Kerry G."/>
            <person name="Heath P."/>
            <person name="Phillimore B."/>
            <person name="Tracey A."/>
            <person name="Corby N."/>
            <person name="Dunn M."/>
            <person name="Johnson C."/>
            <person name="Wood J."/>
            <person name="Clark S."/>
            <person name="Pelan S."/>
            <person name="Griffiths G."/>
            <person name="Smith M."/>
            <person name="Glithero R."/>
            <person name="Howden P."/>
            <person name="Barker N."/>
            <person name="Lloyd C."/>
            <person name="Stevens C."/>
            <person name="Harley J."/>
            <person name="Holt K."/>
            <person name="Panagiotidis G."/>
            <person name="Lovell J."/>
            <person name="Beasley H."/>
            <person name="Henderson C."/>
            <person name="Gordon D."/>
            <person name="Auger K."/>
            <person name="Wright D."/>
            <person name="Collins J."/>
            <person name="Raisen C."/>
            <person name="Dyer L."/>
            <person name="Leung K."/>
            <person name="Robertson L."/>
            <person name="Ambridge K."/>
            <person name="Leongamornlert D."/>
            <person name="McGuire S."/>
            <person name="Gilderthorp R."/>
            <person name="Griffiths C."/>
            <person name="Manthravadi D."/>
            <person name="Nichol S."/>
            <person name="Barker G."/>
            <person name="Whitehead S."/>
            <person name="Kay M."/>
            <person name="Brown J."/>
            <person name="Murnane C."/>
            <person name="Gray E."/>
            <person name="Humphries M."/>
            <person name="Sycamore N."/>
            <person name="Barker D."/>
            <person name="Saunders D."/>
            <person name="Wallis J."/>
            <person name="Babbage A."/>
            <person name="Hammond S."/>
            <person name="Mashreghi-Mohammadi M."/>
            <person name="Barr L."/>
            <person name="Martin S."/>
            <person name="Wray P."/>
            <person name="Ellington A."/>
            <person name="Matthews N."/>
            <person name="Ellwood M."/>
            <person name="Woodmansey R."/>
            <person name="Clark G."/>
            <person name="Cooper J."/>
            <person name="Tromans A."/>
            <person name="Grafham D."/>
            <person name="Skuce C."/>
            <person name="Pandian R."/>
            <person name="Andrews R."/>
            <person name="Harrison E."/>
            <person name="Kimberley A."/>
            <person name="Garnett J."/>
            <person name="Fosker N."/>
            <person name="Hall R."/>
            <person name="Garner P."/>
            <person name="Kelly D."/>
            <person name="Bird C."/>
            <person name="Palmer S."/>
            <person name="Gehring I."/>
            <person name="Berger A."/>
            <person name="Dooley C.M."/>
            <person name="Ersan-Urun Z."/>
            <person name="Eser C."/>
            <person name="Geiger H."/>
            <person name="Geisler M."/>
            <person name="Karotki L."/>
            <person name="Kirn A."/>
            <person name="Konantz J."/>
            <person name="Konantz M."/>
            <person name="Oberlander M."/>
            <person name="Rudolph-Geiger S."/>
            <person name="Teucke M."/>
            <person name="Lanz C."/>
            <person name="Raddatz G."/>
            <person name="Osoegawa K."/>
            <person name="Zhu B."/>
            <person name="Rapp A."/>
            <person name="Widaa S."/>
            <person name="Langford C."/>
            <person name="Yang F."/>
            <person name="Schuster S.C."/>
            <person name="Carter N.P."/>
            <person name="Harrow J."/>
            <person name="Ning Z."/>
            <person name="Herrero J."/>
            <person name="Searle S.M."/>
            <person name="Enright A."/>
            <person name="Geisler R."/>
            <person name="Plasterk R.H."/>
            <person name="Lee C."/>
            <person name="Westerfield M."/>
            <person name="de Jong P.J."/>
            <person name="Zon L.I."/>
            <person name="Postlethwait J.H."/>
            <person name="Nusslein-Volhard C."/>
            <person name="Hubbard T.J."/>
            <person name="Roest Crollius H."/>
            <person name="Rogers J."/>
            <person name="Stemple D.L."/>
        </authorList>
    </citation>
    <scope>NUCLEOTIDE SEQUENCE [LARGE SCALE GENOMIC DNA]</scope>
    <source>
        <strain>Tuebingen</strain>
    </source>
</reference>
<reference key="2">
    <citation type="submission" date="2004-06" db="EMBL/GenBank/DDBJ databases">
        <authorList>
            <consortium name="NIH - Zebrafish Gene Collection (ZGC) project"/>
        </authorList>
    </citation>
    <scope>NUCLEOTIDE SEQUENCE [LARGE SCALE MRNA]</scope>
    <source>
        <tissue>Embryo</tissue>
    </source>
</reference>
<evidence type="ECO:0000250" key="1">
    <source>
        <dbReference type="UniProtKB" id="Q9QZ88"/>
    </source>
</evidence>
<evidence type="ECO:0000250" key="2">
    <source>
        <dbReference type="UniProtKB" id="Q9UBQ0"/>
    </source>
</evidence>
<evidence type="ECO:0000305" key="3"/>
<gene>
    <name type="primary">vps29</name>
    <name type="ORF">zK83d9.2-001</name>
</gene>
<feature type="chain" id="PRO_0000339651" description="Vacuolar protein sorting-associated protein 29">
    <location>
        <begin position="1"/>
        <end position="182"/>
    </location>
</feature>